<accession>Q9ZV48</accession>
<accession>Q94B44</accession>
<name>TPS11_ARATH</name>
<comment type="catalytic activity">
    <reaction>
        <text>D-glucose 6-phosphate + UDP-alpha-D-glucose = alpha,alpha-trehalose 6-phosphate + UDP + H(+)</text>
        <dbReference type="Rhea" id="RHEA:18889"/>
        <dbReference type="ChEBI" id="CHEBI:15378"/>
        <dbReference type="ChEBI" id="CHEBI:58223"/>
        <dbReference type="ChEBI" id="CHEBI:58429"/>
        <dbReference type="ChEBI" id="CHEBI:58885"/>
        <dbReference type="ChEBI" id="CHEBI:61548"/>
        <dbReference type="EC" id="2.4.1.15"/>
    </reaction>
</comment>
<comment type="alternative products">
    <event type="alternative splicing"/>
    <isoform>
        <id>Q9ZV48-1</id>
        <name>1</name>
        <sequence type="displayed"/>
    </isoform>
    <isoform>
        <id>Q9ZV48-2</id>
        <name>2</name>
        <sequence type="described" ref="VSP_032378"/>
    </isoform>
</comment>
<comment type="tissue specificity">
    <text evidence="3">Expressed in leaves, roots, stems and flowers.</text>
</comment>
<comment type="similarity">
    <text evidence="6">In the N-terminal section; belongs to the glycosyltransferase 20 family.</text>
</comment>
<comment type="similarity">
    <text evidence="6">In the C-terminal section; belongs to the trehalose phosphatase family.</text>
</comment>
<comment type="sequence caution" evidence="6">
    <conflict type="erroneous initiation">
        <sequence resource="EMBL-CDS" id="AAK68805"/>
    </conflict>
</comment>
<dbReference type="EC" id="2.4.1.15"/>
<dbReference type="EMBL" id="AC005724">
    <property type="protein sequence ID" value="AAD08939.1"/>
    <property type="molecule type" value="Genomic_DNA"/>
</dbReference>
<dbReference type="EMBL" id="CP002685">
    <property type="protein sequence ID" value="AEC06795.1"/>
    <property type="molecule type" value="Genomic_DNA"/>
</dbReference>
<dbReference type="EMBL" id="AV822913">
    <property type="status" value="NOT_ANNOTATED_CDS"/>
    <property type="molecule type" value="mRNA"/>
</dbReference>
<dbReference type="EMBL" id="AY042865">
    <property type="protein sequence ID" value="AAK68805.1"/>
    <property type="status" value="ALT_INIT"/>
    <property type="molecule type" value="mRNA"/>
</dbReference>
<dbReference type="EMBL" id="AY081537">
    <property type="protein sequence ID" value="AAM10099.1"/>
    <property type="molecule type" value="mRNA"/>
</dbReference>
<dbReference type="PIR" id="E84567">
    <property type="entry name" value="E84567"/>
</dbReference>
<dbReference type="RefSeq" id="NP_179460.1">
    <molecule id="Q9ZV48-1"/>
    <property type="nucleotide sequence ID" value="NM_127426.3"/>
</dbReference>
<dbReference type="SMR" id="Q9ZV48"/>
<dbReference type="BioGRID" id="1742">
    <property type="interactions" value="1"/>
</dbReference>
<dbReference type="FunCoup" id="Q9ZV48">
    <property type="interactions" value="302"/>
</dbReference>
<dbReference type="IntAct" id="Q9ZV48">
    <property type="interactions" value="8"/>
</dbReference>
<dbReference type="STRING" id="3702.Q9ZV48"/>
<dbReference type="CAZy" id="GT20">
    <property type="family name" value="Glycosyltransferase Family 20"/>
</dbReference>
<dbReference type="iPTMnet" id="Q9ZV48"/>
<dbReference type="PaxDb" id="3702-AT2G18700.1"/>
<dbReference type="ProteomicsDB" id="228328">
    <molecule id="Q9ZV48-1"/>
</dbReference>
<dbReference type="EnsemblPlants" id="AT2G18700.1">
    <molecule id="Q9ZV48-1"/>
    <property type="protein sequence ID" value="AT2G18700.1"/>
    <property type="gene ID" value="AT2G18700"/>
</dbReference>
<dbReference type="GeneID" id="816385"/>
<dbReference type="Gramene" id="AT2G18700.1">
    <molecule id="Q9ZV48-1"/>
    <property type="protein sequence ID" value="AT2G18700.1"/>
    <property type="gene ID" value="AT2G18700"/>
</dbReference>
<dbReference type="KEGG" id="ath:AT2G18700"/>
<dbReference type="Araport" id="AT2G18700"/>
<dbReference type="TAIR" id="AT2G18700">
    <property type="gene designation" value="TPS11"/>
</dbReference>
<dbReference type="eggNOG" id="KOG1050">
    <property type="taxonomic scope" value="Eukaryota"/>
</dbReference>
<dbReference type="HOGENOM" id="CLU_002351_3_1_1"/>
<dbReference type="InParanoid" id="Q9ZV48"/>
<dbReference type="OMA" id="HSMARIF"/>
<dbReference type="OrthoDB" id="755951at2759"/>
<dbReference type="PhylomeDB" id="Q9ZV48"/>
<dbReference type="PRO" id="PR:Q9ZV48"/>
<dbReference type="Proteomes" id="UP000006548">
    <property type="component" value="Chromosome 2"/>
</dbReference>
<dbReference type="ExpressionAtlas" id="Q9ZV48">
    <property type="expression patterns" value="baseline and differential"/>
</dbReference>
<dbReference type="GO" id="GO:0005739">
    <property type="term" value="C:mitochondrion"/>
    <property type="evidence" value="ECO:0007005"/>
    <property type="project" value="TAIR"/>
</dbReference>
<dbReference type="GO" id="GO:0016757">
    <property type="term" value="F:glycosyltransferase activity"/>
    <property type="evidence" value="ECO:0007669"/>
    <property type="project" value="UniProtKB-KW"/>
</dbReference>
<dbReference type="GO" id="GO:0005992">
    <property type="term" value="P:trehalose biosynthetic process"/>
    <property type="evidence" value="ECO:0007669"/>
    <property type="project" value="InterPro"/>
</dbReference>
<dbReference type="CDD" id="cd03788">
    <property type="entry name" value="GT20_TPS"/>
    <property type="match status" value="1"/>
</dbReference>
<dbReference type="CDD" id="cd01627">
    <property type="entry name" value="HAD_TPP"/>
    <property type="match status" value="1"/>
</dbReference>
<dbReference type="FunFam" id="3.40.50.2000:FF:000010">
    <property type="entry name" value="Alpha,alpha-trehalose-phosphate synthase"/>
    <property type="match status" value="1"/>
</dbReference>
<dbReference type="FunFam" id="3.40.50.1000:FF:000052">
    <property type="entry name" value="Alpha,alpha-trehalose-phosphate synthase [UDP-forming] 6"/>
    <property type="match status" value="1"/>
</dbReference>
<dbReference type="FunFam" id="3.40.50.1000:FF:000054">
    <property type="entry name" value="alpha,alpha-trehalose-phosphate synthase [UDP-forming] 6"/>
    <property type="match status" value="1"/>
</dbReference>
<dbReference type="FunFam" id="3.40.50.2000:FF:000017">
    <property type="entry name" value="alpha,alpha-trehalose-phosphate synthase [UDP-forming] 6"/>
    <property type="match status" value="1"/>
</dbReference>
<dbReference type="Gene3D" id="3.40.50.2000">
    <property type="entry name" value="Glycogen Phosphorylase B"/>
    <property type="match status" value="2"/>
</dbReference>
<dbReference type="Gene3D" id="3.40.50.1000">
    <property type="entry name" value="HAD superfamily/HAD-like"/>
    <property type="match status" value="2"/>
</dbReference>
<dbReference type="InterPro" id="IPR001830">
    <property type="entry name" value="Glyco_trans_20"/>
</dbReference>
<dbReference type="InterPro" id="IPR036412">
    <property type="entry name" value="HAD-like_sf"/>
</dbReference>
<dbReference type="InterPro" id="IPR006379">
    <property type="entry name" value="HAD-SF_hydro_IIB"/>
</dbReference>
<dbReference type="InterPro" id="IPR023214">
    <property type="entry name" value="HAD_sf"/>
</dbReference>
<dbReference type="InterPro" id="IPR003337">
    <property type="entry name" value="Trehalose_PPase"/>
</dbReference>
<dbReference type="NCBIfam" id="TIGR01484">
    <property type="entry name" value="HAD-SF-IIB"/>
    <property type="match status" value="1"/>
</dbReference>
<dbReference type="NCBIfam" id="TIGR00685">
    <property type="entry name" value="T6PP"/>
    <property type="match status" value="1"/>
</dbReference>
<dbReference type="PANTHER" id="PTHR10788:SF46">
    <property type="entry name" value="ALPHA,ALPHA-TREHALOSE-PHOSPHATE SYNTHASE [UDP-FORMING] 11-RELATED"/>
    <property type="match status" value="1"/>
</dbReference>
<dbReference type="PANTHER" id="PTHR10788">
    <property type="entry name" value="TREHALOSE-6-PHOSPHATE SYNTHASE"/>
    <property type="match status" value="1"/>
</dbReference>
<dbReference type="Pfam" id="PF00982">
    <property type="entry name" value="Glyco_transf_20"/>
    <property type="match status" value="1"/>
</dbReference>
<dbReference type="Pfam" id="PF02358">
    <property type="entry name" value="Trehalose_PPase"/>
    <property type="match status" value="1"/>
</dbReference>
<dbReference type="SUPFAM" id="SSF56784">
    <property type="entry name" value="HAD-like"/>
    <property type="match status" value="1"/>
</dbReference>
<dbReference type="SUPFAM" id="SSF53756">
    <property type="entry name" value="UDP-Glycosyltransferase/glycogen phosphorylase"/>
    <property type="match status" value="1"/>
</dbReference>
<organism>
    <name type="scientific">Arabidopsis thaliana</name>
    <name type="common">Mouse-ear cress</name>
    <dbReference type="NCBI Taxonomy" id="3702"/>
    <lineage>
        <taxon>Eukaryota</taxon>
        <taxon>Viridiplantae</taxon>
        <taxon>Streptophyta</taxon>
        <taxon>Embryophyta</taxon>
        <taxon>Tracheophyta</taxon>
        <taxon>Spermatophyta</taxon>
        <taxon>Magnoliopsida</taxon>
        <taxon>eudicotyledons</taxon>
        <taxon>Gunneridae</taxon>
        <taxon>Pentapetalae</taxon>
        <taxon>rosids</taxon>
        <taxon>malvids</taxon>
        <taxon>Brassicales</taxon>
        <taxon>Brassicaceae</taxon>
        <taxon>Camelineae</taxon>
        <taxon>Arabidopsis</taxon>
    </lineage>
</organism>
<feature type="chain" id="PRO_0000324832" description="Probable alpha,alpha-trehalose-phosphate synthase [UDP-forming] 11">
    <location>
        <begin position="1"/>
        <end position="862"/>
    </location>
</feature>
<feature type="region of interest" description="Glycosyltransferase">
    <location>
        <begin position="50"/>
        <end position="538"/>
    </location>
</feature>
<feature type="region of interest" description="Disordered" evidence="2">
    <location>
        <begin position="838"/>
        <end position="862"/>
    </location>
</feature>
<feature type="modified residue" description="Phosphoserine" evidence="1">
    <location>
        <position position="5"/>
    </location>
</feature>
<feature type="splice variant" id="VSP_032378" description="In isoform 2." evidence="4 5">
    <original>T</original>
    <variation>TRYFAKTLPFHHLPSHFCKVNTFLLLICNH</variation>
    <location>
        <position position="654"/>
    </location>
</feature>
<evidence type="ECO:0000250" key="1">
    <source>
        <dbReference type="UniProtKB" id="O23617"/>
    </source>
</evidence>
<evidence type="ECO:0000256" key="2">
    <source>
        <dbReference type="SAM" id="MobiDB-lite"/>
    </source>
</evidence>
<evidence type="ECO:0000269" key="3">
    <source>
    </source>
</evidence>
<evidence type="ECO:0000303" key="4">
    <source>
    </source>
</evidence>
<evidence type="ECO:0000303" key="5">
    <source>
    </source>
</evidence>
<evidence type="ECO:0000305" key="6"/>
<reference key="1">
    <citation type="journal article" date="2001" name="J. Exp. Bot.">
        <title>Trehalose metabolism in Arabidopsis: occurrence of trehalose and molecular cloning and characterization of trehalose-6-phosphate synthase homologues.</title>
        <authorList>
            <person name="Vogel G."/>
            <person name="Fiehn O."/>
            <person name="Jean-Richard-dit-Bressel L."/>
            <person name="Boller T."/>
            <person name="Wiemken A."/>
            <person name="Aeschbacher R.A."/>
            <person name="Wingler A."/>
        </authorList>
    </citation>
    <scope>NUCLEOTIDE SEQUENCE [MRNA]</scope>
    <scope>TISSUE SPECIFICITY</scope>
    <source>
        <strain>cv. Landsberg erecta</strain>
    </source>
</reference>
<reference key="2">
    <citation type="journal article" date="1999" name="Nature">
        <title>Sequence and analysis of chromosome 2 of the plant Arabidopsis thaliana.</title>
        <authorList>
            <person name="Lin X."/>
            <person name="Kaul S."/>
            <person name="Rounsley S.D."/>
            <person name="Shea T.P."/>
            <person name="Benito M.-I."/>
            <person name="Town C.D."/>
            <person name="Fujii C.Y."/>
            <person name="Mason T.M."/>
            <person name="Bowman C.L."/>
            <person name="Barnstead M.E."/>
            <person name="Feldblyum T.V."/>
            <person name="Buell C.R."/>
            <person name="Ketchum K.A."/>
            <person name="Lee J.J."/>
            <person name="Ronning C.M."/>
            <person name="Koo H.L."/>
            <person name="Moffat K.S."/>
            <person name="Cronin L.A."/>
            <person name="Shen M."/>
            <person name="Pai G."/>
            <person name="Van Aken S."/>
            <person name="Umayam L."/>
            <person name="Tallon L.J."/>
            <person name="Gill J.E."/>
            <person name="Adams M.D."/>
            <person name="Carrera A.J."/>
            <person name="Creasy T.H."/>
            <person name="Goodman H.M."/>
            <person name="Somerville C.R."/>
            <person name="Copenhaver G.P."/>
            <person name="Preuss D."/>
            <person name="Nierman W.C."/>
            <person name="White O."/>
            <person name="Eisen J.A."/>
            <person name="Salzberg S.L."/>
            <person name="Fraser C.M."/>
            <person name="Venter J.C."/>
        </authorList>
    </citation>
    <scope>NUCLEOTIDE SEQUENCE [LARGE SCALE GENOMIC DNA]</scope>
    <source>
        <strain>cv. Columbia</strain>
    </source>
</reference>
<reference key="3">
    <citation type="journal article" date="2017" name="Plant J.">
        <title>Araport11: a complete reannotation of the Arabidopsis thaliana reference genome.</title>
        <authorList>
            <person name="Cheng C.Y."/>
            <person name="Krishnakumar V."/>
            <person name="Chan A.P."/>
            <person name="Thibaud-Nissen F."/>
            <person name="Schobel S."/>
            <person name="Town C.D."/>
        </authorList>
    </citation>
    <scope>GENOME REANNOTATION</scope>
    <source>
        <strain>cv. Columbia</strain>
    </source>
</reference>
<reference key="4">
    <citation type="journal article" date="2002" name="Science">
        <title>Functional annotation of a full-length Arabidopsis cDNA collection.</title>
        <authorList>
            <person name="Seki M."/>
            <person name="Narusaka M."/>
            <person name="Kamiya A."/>
            <person name="Ishida J."/>
            <person name="Satou M."/>
            <person name="Sakurai T."/>
            <person name="Nakajima M."/>
            <person name="Enju A."/>
            <person name="Akiyama K."/>
            <person name="Oono Y."/>
            <person name="Muramatsu M."/>
            <person name="Hayashizaki Y."/>
            <person name="Kawai J."/>
            <person name="Carninci P."/>
            <person name="Itoh M."/>
            <person name="Ishii Y."/>
            <person name="Arakawa T."/>
            <person name="Shibata K."/>
            <person name="Shinagawa A."/>
            <person name="Shinozaki K."/>
        </authorList>
    </citation>
    <scope>NUCLEOTIDE SEQUENCE [LARGE SCALE MRNA] OF 588-778 (ISOFORM 2)</scope>
    <source>
        <strain>cv. Columbia</strain>
    </source>
</reference>
<reference key="5">
    <citation type="journal article" date="2003" name="Science">
        <title>Empirical analysis of transcriptional activity in the Arabidopsis genome.</title>
        <authorList>
            <person name="Yamada K."/>
            <person name="Lim J."/>
            <person name="Dale J.M."/>
            <person name="Chen H."/>
            <person name="Shinn P."/>
            <person name="Palm C.J."/>
            <person name="Southwick A.M."/>
            <person name="Wu H.C."/>
            <person name="Kim C.J."/>
            <person name="Nguyen M."/>
            <person name="Pham P.K."/>
            <person name="Cheuk R.F."/>
            <person name="Karlin-Newmann G."/>
            <person name="Liu S.X."/>
            <person name="Lam B."/>
            <person name="Sakano H."/>
            <person name="Wu T."/>
            <person name="Yu G."/>
            <person name="Miranda M."/>
            <person name="Quach H.L."/>
            <person name="Tripp M."/>
            <person name="Chang C.H."/>
            <person name="Lee J.M."/>
            <person name="Toriumi M.J."/>
            <person name="Chan M.M."/>
            <person name="Tang C.C."/>
            <person name="Onodera C.S."/>
            <person name="Deng J.M."/>
            <person name="Akiyama K."/>
            <person name="Ansari Y."/>
            <person name="Arakawa T."/>
            <person name="Banh J."/>
            <person name="Banno F."/>
            <person name="Bowser L."/>
            <person name="Brooks S.Y."/>
            <person name="Carninci P."/>
            <person name="Chao Q."/>
            <person name="Choy N."/>
            <person name="Enju A."/>
            <person name="Goldsmith A.D."/>
            <person name="Gurjal M."/>
            <person name="Hansen N.F."/>
            <person name="Hayashizaki Y."/>
            <person name="Johnson-Hopson C."/>
            <person name="Hsuan V.W."/>
            <person name="Iida K."/>
            <person name="Karnes M."/>
            <person name="Khan S."/>
            <person name="Koesema E."/>
            <person name="Ishida J."/>
            <person name="Jiang P.X."/>
            <person name="Jones T."/>
            <person name="Kawai J."/>
            <person name="Kamiya A."/>
            <person name="Meyers C."/>
            <person name="Nakajima M."/>
            <person name="Narusaka M."/>
            <person name="Seki M."/>
            <person name="Sakurai T."/>
            <person name="Satou M."/>
            <person name="Tamse R."/>
            <person name="Vaysberg M."/>
            <person name="Wallender E.K."/>
            <person name="Wong C."/>
            <person name="Yamamura Y."/>
            <person name="Yuan S."/>
            <person name="Shinozaki K."/>
            <person name="Davis R.W."/>
            <person name="Theologis A."/>
            <person name="Ecker J.R."/>
        </authorList>
    </citation>
    <scope>NUCLEOTIDE SEQUENCE [LARGE SCALE MRNA] OF 589-862 (ISOFORM 2)</scope>
    <source>
        <strain>cv. Columbia</strain>
    </source>
</reference>
<reference key="6">
    <citation type="journal article" date="2001" name="Trends Plant Sci.">
        <title>An unexpected plethora of trehalose biosynthesis genes in Arabidopsis thaliana.</title>
        <authorList>
            <person name="Leyman B."/>
            <person name="Van Dijck P."/>
            <person name="Thevelein J.M."/>
        </authorList>
    </citation>
    <scope>GENE FAMILY</scope>
    <scope>NOMENCLATURE</scope>
</reference>
<protein>
    <recommendedName>
        <fullName>Probable alpha,alpha-trehalose-phosphate synthase [UDP-forming] 11</fullName>
        <ecNumber>2.4.1.15</ecNumber>
    </recommendedName>
    <alternativeName>
        <fullName>Trehalose-6-phosphate synthase 11</fullName>
        <shortName>AtTPS11</shortName>
    </alternativeName>
</protein>
<sequence length="862" mass="98275">MSPESWKDQLSLVSADDYRIMGRNRIPNAVTKLSGLETDDPNGGAWVTKPKRIVVSNQLPLRAHRDISSNKWCFEFDNDSLYLQLKDGFPPETEVVYVGSLNADVLPSEQEDVSQFLLEKFQCVPTFLPSDLLNKYYHGFCKHYLWPIFHYLLPMTQAQGSLFDRSNWRAYTTVNKIFADKIFEVLNPDDDYVWIHDYHLMILPTFLRNRFHRIKLGIFLHSPFPSSEIYRTLPVRDEILKGFLNCDLVGFHTFDYARHFLSCCSRMLGLDYESKRGYIGLEYFGRTVSIKILPVGIHMGQIESIKASEKTAEKVKRLRERFKGNIVMLGVDDLDMFKGISLKFWAMGQLLEQNEELRGKVVLVQITNPARSSGKDVQDVEKQINLIADEINSKFGRPGGYKPIVFINGPVSTLDKVAYYAISECVVVNAVRDGMNLVPYKYTVTRQGSPALDAALGFGEDDVRKSVIIVSEFIGCSPSLSGAIRVNPWNIDAVTNAMSSAMTMSDKEKNLRHQKHHKYISSHNVAYWARSYDQDLQRACKDHYNKRFWGVGFGLFFKVVALDPNFRRLCGETIVPAYRRSSSRLILLDYDGTMMDQDTLDKRPSDDLISLLNRLCDDPSNLVFIVSGRGKDPLSKWFDSCPNLGISAEHGYFTRWNSNSPWETSELPADLSWKKIAKPVMNHYMEATDGSFIEEKESAMVWHHQEADHSFGSWQAKELLDHLESVLTNEPVVVKRGQHIVEVKPQGVSKGKVVEHLIATMRNTKGKRPDFLLCIGDDRSDEDMFDSIVKHQDVSSIGLEEVFACTVGQKPSKAKYYLDDTPSVIKMLEWLASASDGSKHEQQKKQSKFTFQQPMGQCRKKA</sequence>
<gene>
    <name type="primary">TPS11</name>
    <name type="synonym">TPSB</name>
    <name type="ordered locus">At2g18700</name>
    <name type="ORF">MSF3.8</name>
</gene>
<proteinExistence type="evidence at transcript level"/>
<keyword id="KW-0025">Alternative splicing</keyword>
<keyword id="KW-0328">Glycosyltransferase</keyword>
<keyword id="KW-0597">Phosphoprotein</keyword>
<keyword id="KW-1185">Reference proteome</keyword>
<keyword id="KW-0808">Transferase</keyword>